<name>THIE_ARCFU</name>
<reference key="1">
    <citation type="journal article" date="1997" name="Nature">
        <title>The complete genome sequence of the hyperthermophilic, sulphate-reducing archaeon Archaeoglobus fulgidus.</title>
        <authorList>
            <person name="Klenk H.-P."/>
            <person name="Clayton R.A."/>
            <person name="Tomb J.-F."/>
            <person name="White O."/>
            <person name="Nelson K.E."/>
            <person name="Ketchum K.A."/>
            <person name="Dodson R.J."/>
            <person name="Gwinn M.L."/>
            <person name="Hickey E.K."/>
            <person name="Peterson J.D."/>
            <person name="Richardson D.L."/>
            <person name="Kerlavage A.R."/>
            <person name="Graham D.E."/>
            <person name="Kyrpides N.C."/>
            <person name="Fleischmann R.D."/>
            <person name="Quackenbush J."/>
            <person name="Lee N.H."/>
            <person name="Sutton G.G."/>
            <person name="Gill S.R."/>
            <person name="Kirkness E.F."/>
            <person name="Dougherty B.A."/>
            <person name="McKenney K."/>
            <person name="Adams M.D."/>
            <person name="Loftus B.J."/>
            <person name="Peterson S.N."/>
            <person name="Reich C.I."/>
            <person name="McNeil L.K."/>
            <person name="Badger J.H."/>
            <person name="Glodek A."/>
            <person name="Zhou L."/>
            <person name="Overbeek R."/>
            <person name="Gocayne J.D."/>
            <person name="Weidman J.F."/>
            <person name="McDonald L.A."/>
            <person name="Utterback T.R."/>
            <person name="Cotton M.D."/>
            <person name="Spriggs T."/>
            <person name="Artiach P."/>
            <person name="Kaine B.P."/>
            <person name="Sykes S.M."/>
            <person name="Sadow P.W."/>
            <person name="D'Andrea K.P."/>
            <person name="Bowman C."/>
            <person name="Fujii C."/>
            <person name="Garland S.A."/>
            <person name="Mason T.M."/>
            <person name="Olsen G.J."/>
            <person name="Fraser C.M."/>
            <person name="Smith H.O."/>
            <person name="Woese C.R."/>
            <person name="Venter J.C."/>
        </authorList>
    </citation>
    <scope>NUCLEOTIDE SEQUENCE [LARGE SCALE GENOMIC DNA]</scope>
    <source>
        <strain>ATCC 49558 / DSM 4304 / JCM 9628 / NBRC 100126 / VC-16</strain>
    </source>
</reference>
<evidence type="ECO:0000255" key="1">
    <source>
        <dbReference type="HAMAP-Rule" id="MF_00097"/>
    </source>
</evidence>
<dbReference type="EC" id="2.5.1.3" evidence="1"/>
<dbReference type="EMBL" id="AE000782">
    <property type="protein sequence ID" value="AAB89175.1"/>
    <property type="molecule type" value="Genomic_DNA"/>
</dbReference>
<dbReference type="PIR" id="A69509">
    <property type="entry name" value="A69509"/>
</dbReference>
<dbReference type="RefSeq" id="WP_010879566.1">
    <property type="nucleotide sequence ID" value="NC_000917.1"/>
</dbReference>
<dbReference type="SMR" id="O28205"/>
<dbReference type="STRING" id="224325.AF_2074"/>
<dbReference type="PaxDb" id="224325-AF_2074"/>
<dbReference type="EnsemblBacteria" id="AAB89175">
    <property type="protein sequence ID" value="AAB89175"/>
    <property type="gene ID" value="AF_2074"/>
</dbReference>
<dbReference type="GeneID" id="24795823"/>
<dbReference type="KEGG" id="afu:AF_2074"/>
<dbReference type="eggNOG" id="arCOG01089">
    <property type="taxonomic scope" value="Archaea"/>
</dbReference>
<dbReference type="HOGENOM" id="CLU_018272_3_2_2"/>
<dbReference type="OrthoDB" id="85572at2157"/>
<dbReference type="PhylomeDB" id="O28205"/>
<dbReference type="UniPathway" id="UPA00060">
    <property type="reaction ID" value="UER00141"/>
</dbReference>
<dbReference type="Proteomes" id="UP000002199">
    <property type="component" value="Chromosome"/>
</dbReference>
<dbReference type="GO" id="GO:0005737">
    <property type="term" value="C:cytoplasm"/>
    <property type="evidence" value="ECO:0007669"/>
    <property type="project" value="TreeGrafter"/>
</dbReference>
<dbReference type="GO" id="GO:0000287">
    <property type="term" value="F:magnesium ion binding"/>
    <property type="evidence" value="ECO:0007669"/>
    <property type="project" value="UniProtKB-UniRule"/>
</dbReference>
<dbReference type="GO" id="GO:0004789">
    <property type="term" value="F:thiamine-phosphate diphosphorylase activity"/>
    <property type="evidence" value="ECO:0007669"/>
    <property type="project" value="UniProtKB-UniRule"/>
</dbReference>
<dbReference type="GO" id="GO:0009228">
    <property type="term" value="P:thiamine biosynthetic process"/>
    <property type="evidence" value="ECO:0007669"/>
    <property type="project" value="UniProtKB-KW"/>
</dbReference>
<dbReference type="GO" id="GO:0009229">
    <property type="term" value="P:thiamine diphosphate biosynthetic process"/>
    <property type="evidence" value="ECO:0007669"/>
    <property type="project" value="UniProtKB-UniRule"/>
</dbReference>
<dbReference type="CDD" id="cd00564">
    <property type="entry name" value="TMP_TenI"/>
    <property type="match status" value="1"/>
</dbReference>
<dbReference type="FunFam" id="3.20.20.70:FF:000096">
    <property type="entry name" value="Thiamine-phosphate synthase"/>
    <property type="match status" value="1"/>
</dbReference>
<dbReference type="Gene3D" id="3.20.20.70">
    <property type="entry name" value="Aldolase class I"/>
    <property type="match status" value="1"/>
</dbReference>
<dbReference type="HAMAP" id="MF_00097">
    <property type="entry name" value="TMP_synthase"/>
    <property type="match status" value="1"/>
</dbReference>
<dbReference type="InterPro" id="IPR013785">
    <property type="entry name" value="Aldolase_TIM"/>
</dbReference>
<dbReference type="InterPro" id="IPR036206">
    <property type="entry name" value="ThiamineP_synth_sf"/>
</dbReference>
<dbReference type="InterPro" id="IPR022998">
    <property type="entry name" value="ThiamineP_synth_TenI"/>
</dbReference>
<dbReference type="InterPro" id="IPR034291">
    <property type="entry name" value="TMP_synthase"/>
</dbReference>
<dbReference type="NCBIfam" id="TIGR00693">
    <property type="entry name" value="thiE"/>
    <property type="match status" value="1"/>
</dbReference>
<dbReference type="PANTHER" id="PTHR20857:SF23">
    <property type="entry name" value="THIAMINE BIOSYNTHETIC BIFUNCTIONAL ENZYME"/>
    <property type="match status" value="1"/>
</dbReference>
<dbReference type="PANTHER" id="PTHR20857">
    <property type="entry name" value="THIAMINE-PHOSPHATE PYROPHOSPHORYLASE"/>
    <property type="match status" value="1"/>
</dbReference>
<dbReference type="Pfam" id="PF02581">
    <property type="entry name" value="TMP-TENI"/>
    <property type="match status" value="1"/>
</dbReference>
<dbReference type="SUPFAM" id="SSF51391">
    <property type="entry name" value="Thiamin phosphate synthase"/>
    <property type="match status" value="1"/>
</dbReference>
<sequence>MSRLEDYLSVYFITDSEFGRTHEELAEMALRAGVRAIQFREKKLSTKRMYEIGKRLRALTRDYDALFFVNDRIDVALAVDADGVHIGQDDMPAFAAREIFPGYIGVSAGNVEEAKKDERFADYLGVGPVFPTKTKEDAGEAIGIEGLRRIVESVSVPVVAIGSINKQNAIEVLKTGVAGIAVISAIAAADDPERAARELVELVRRFKSGL</sequence>
<comment type="function">
    <text evidence="1">Condenses 4-methyl-5-(beta-hydroxyethyl)thiazole monophosphate (THZ-P) and 2-methyl-4-amino-5-hydroxymethyl pyrimidine pyrophosphate (HMP-PP) to form thiamine monophosphate (TMP).</text>
</comment>
<comment type="catalytic activity">
    <reaction evidence="1">
        <text>2-[(2R,5Z)-2-carboxy-4-methylthiazol-5(2H)-ylidene]ethyl phosphate + 4-amino-2-methyl-5-(diphosphooxymethyl)pyrimidine + 2 H(+) = thiamine phosphate + CO2 + diphosphate</text>
        <dbReference type="Rhea" id="RHEA:47844"/>
        <dbReference type="ChEBI" id="CHEBI:15378"/>
        <dbReference type="ChEBI" id="CHEBI:16526"/>
        <dbReference type="ChEBI" id="CHEBI:33019"/>
        <dbReference type="ChEBI" id="CHEBI:37575"/>
        <dbReference type="ChEBI" id="CHEBI:57841"/>
        <dbReference type="ChEBI" id="CHEBI:62899"/>
        <dbReference type="EC" id="2.5.1.3"/>
    </reaction>
</comment>
<comment type="catalytic activity">
    <reaction evidence="1">
        <text>2-(2-carboxy-4-methylthiazol-5-yl)ethyl phosphate + 4-amino-2-methyl-5-(diphosphooxymethyl)pyrimidine + 2 H(+) = thiamine phosphate + CO2 + diphosphate</text>
        <dbReference type="Rhea" id="RHEA:47848"/>
        <dbReference type="ChEBI" id="CHEBI:15378"/>
        <dbReference type="ChEBI" id="CHEBI:16526"/>
        <dbReference type="ChEBI" id="CHEBI:33019"/>
        <dbReference type="ChEBI" id="CHEBI:37575"/>
        <dbReference type="ChEBI" id="CHEBI:57841"/>
        <dbReference type="ChEBI" id="CHEBI:62890"/>
        <dbReference type="EC" id="2.5.1.3"/>
    </reaction>
</comment>
<comment type="catalytic activity">
    <reaction evidence="1">
        <text>4-methyl-5-(2-phosphooxyethyl)-thiazole + 4-amino-2-methyl-5-(diphosphooxymethyl)pyrimidine + H(+) = thiamine phosphate + diphosphate</text>
        <dbReference type="Rhea" id="RHEA:22328"/>
        <dbReference type="ChEBI" id="CHEBI:15378"/>
        <dbReference type="ChEBI" id="CHEBI:33019"/>
        <dbReference type="ChEBI" id="CHEBI:37575"/>
        <dbReference type="ChEBI" id="CHEBI:57841"/>
        <dbReference type="ChEBI" id="CHEBI:58296"/>
        <dbReference type="EC" id="2.5.1.3"/>
    </reaction>
</comment>
<comment type="cofactor">
    <cofactor evidence="1">
        <name>Mg(2+)</name>
        <dbReference type="ChEBI" id="CHEBI:18420"/>
    </cofactor>
    <text evidence="1">Binds 1 Mg(2+) ion per subunit.</text>
</comment>
<comment type="pathway">
    <text evidence="1">Cofactor biosynthesis; thiamine diphosphate biosynthesis; thiamine phosphate from 4-amino-2-methyl-5-diphosphomethylpyrimidine and 4-methyl-5-(2-phosphoethyl)-thiazole: step 1/1.</text>
</comment>
<comment type="similarity">
    <text evidence="1">Belongs to the thiamine-phosphate synthase family.</text>
</comment>
<proteinExistence type="inferred from homology"/>
<gene>
    <name evidence="1" type="primary">thiE</name>
    <name type="ordered locus">AF_2074</name>
</gene>
<keyword id="KW-0460">Magnesium</keyword>
<keyword id="KW-0479">Metal-binding</keyword>
<keyword id="KW-1185">Reference proteome</keyword>
<keyword id="KW-0784">Thiamine biosynthesis</keyword>
<keyword id="KW-0808">Transferase</keyword>
<accession>O28205</accession>
<protein>
    <recommendedName>
        <fullName evidence="1">Thiamine-phosphate synthase</fullName>
        <shortName evidence="1">TP synthase</shortName>
        <shortName evidence="1">TPS</shortName>
        <ecNumber evidence="1">2.5.1.3</ecNumber>
    </recommendedName>
    <alternativeName>
        <fullName evidence="1">Thiamine-phosphate pyrophosphorylase</fullName>
        <shortName evidence="1">TMP pyrophosphorylase</shortName>
        <shortName evidence="1">TMP-PPase</shortName>
    </alternativeName>
</protein>
<feature type="chain" id="PRO_0000157067" description="Thiamine-phosphate synthase">
    <location>
        <begin position="1"/>
        <end position="210"/>
    </location>
</feature>
<feature type="binding site" evidence="1">
    <location>
        <begin position="38"/>
        <end position="42"/>
    </location>
    <ligand>
        <name>4-amino-2-methyl-5-(diphosphooxymethyl)pyrimidine</name>
        <dbReference type="ChEBI" id="CHEBI:57841"/>
    </ligand>
</feature>
<feature type="binding site" evidence="1">
    <location>
        <position position="70"/>
    </location>
    <ligand>
        <name>4-amino-2-methyl-5-(diphosphooxymethyl)pyrimidine</name>
        <dbReference type="ChEBI" id="CHEBI:57841"/>
    </ligand>
</feature>
<feature type="binding site" evidence="1">
    <location>
        <position position="71"/>
    </location>
    <ligand>
        <name>Mg(2+)</name>
        <dbReference type="ChEBI" id="CHEBI:18420"/>
    </ligand>
</feature>
<feature type="binding site" evidence="1">
    <location>
        <position position="90"/>
    </location>
    <ligand>
        <name>Mg(2+)</name>
        <dbReference type="ChEBI" id="CHEBI:18420"/>
    </ligand>
</feature>
<feature type="binding site" evidence="1">
    <location>
        <position position="107"/>
    </location>
    <ligand>
        <name>4-amino-2-methyl-5-(diphosphooxymethyl)pyrimidine</name>
        <dbReference type="ChEBI" id="CHEBI:57841"/>
    </ligand>
</feature>
<feature type="binding site" evidence="1">
    <location>
        <begin position="132"/>
        <end position="134"/>
    </location>
    <ligand>
        <name>2-[(2R,5Z)-2-carboxy-4-methylthiazol-5(2H)-ylidene]ethyl phosphate</name>
        <dbReference type="ChEBI" id="CHEBI:62899"/>
    </ligand>
</feature>
<feature type="binding site" evidence="1">
    <location>
        <position position="135"/>
    </location>
    <ligand>
        <name>4-amino-2-methyl-5-(diphosphooxymethyl)pyrimidine</name>
        <dbReference type="ChEBI" id="CHEBI:57841"/>
    </ligand>
</feature>
<feature type="binding site" evidence="1">
    <location>
        <begin position="183"/>
        <end position="184"/>
    </location>
    <ligand>
        <name>2-[(2R,5Z)-2-carboxy-4-methylthiazol-5(2H)-ylidene]ethyl phosphate</name>
        <dbReference type="ChEBI" id="CHEBI:62899"/>
    </ligand>
</feature>
<organism>
    <name type="scientific">Archaeoglobus fulgidus (strain ATCC 49558 / DSM 4304 / JCM 9628 / NBRC 100126 / VC-16)</name>
    <dbReference type="NCBI Taxonomy" id="224325"/>
    <lineage>
        <taxon>Archaea</taxon>
        <taxon>Methanobacteriati</taxon>
        <taxon>Methanobacteriota</taxon>
        <taxon>Archaeoglobi</taxon>
        <taxon>Archaeoglobales</taxon>
        <taxon>Archaeoglobaceae</taxon>
        <taxon>Archaeoglobus</taxon>
    </lineage>
</organism>